<reference key="1">
    <citation type="journal article" date="2004" name="Nat. Genet.">
        <title>Complete sequencing and characterization of 21,243 full-length human cDNAs.</title>
        <authorList>
            <person name="Ota T."/>
            <person name="Suzuki Y."/>
            <person name="Nishikawa T."/>
            <person name="Otsuki T."/>
            <person name="Sugiyama T."/>
            <person name="Irie R."/>
            <person name="Wakamatsu A."/>
            <person name="Hayashi K."/>
            <person name="Sato H."/>
            <person name="Nagai K."/>
            <person name="Kimura K."/>
            <person name="Makita H."/>
            <person name="Sekine M."/>
            <person name="Obayashi M."/>
            <person name="Nishi T."/>
            <person name="Shibahara T."/>
            <person name="Tanaka T."/>
            <person name="Ishii S."/>
            <person name="Yamamoto J."/>
            <person name="Saito K."/>
            <person name="Kawai Y."/>
            <person name="Isono Y."/>
            <person name="Nakamura Y."/>
            <person name="Nagahari K."/>
            <person name="Murakami K."/>
            <person name="Yasuda T."/>
            <person name="Iwayanagi T."/>
            <person name="Wagatsuma M."/>
            <person name="Shiratori A."/>
            <person name="Sudo H."/>
            <person name="Hosoiri T."/>
            <person name="Kaku Y."/>
            <person name="Kodaira H."/>
            <person name="Kondo H."/>
            <person name="Sugawara M."/>
            <person name="Takahashi M."/>
            <person name="Kanda K."/>
            <person name="Yokoi T."/>
            <person name="Furuya T."/>
            <person name="Kikkawa E."/>
            <person name="Omura Y."/>
            <person name="Abe K."/>
            <person name="Kamihara K."/>
            <person name="Katsuta N."/>
            <person name="Sato K."/>
            <person name="Tanikawa M."/>
            <person name="Yamazaki M."/>
            <person name="Ninomiya K."/>
            <person name="Ishibashi T."/>
            <person name="Yamashita H."/>
            <person name="Murakawa K."/>
            <person name="Fujimori K."/>
            <person name="Tanai H."/>
            <person name="Kimata M."/>
            <person name="Watanabe M."/>
            <person name="Hiraoka S."/>
            <person name="Chiba Y."/>
            <person name="Ishida S."/>
            <person name="Ono Y."/>
            <person name="Takiguchi S."/>
            <person name="Watanabe S."/>
            <person name="Yosida M."/>
            <person name="Hotuta T."/>
            <person name="Kusano J."/>
            <person name="Kanehori K."/>
            <person name="Takahashi-Fujii A."/>
            <person name="Hara H."/>
            <person name="Tanase T.-O."/>
            <person name="Nomura Y."/>
            <person name="Togiya S."/>
            <person name="Komai F."/>
            <person name="Hara R."/>
            <person name="Takeuchi K."/>
            <person name="Arita M."/>
            <person name="Imose N."/>
            <person name="Musashino K."/>
            <person name="Yuuki H."/>
            <person name="Oshima A."/>
            <person name="Sasaki N."/>
            <person name="Aotsuka S."/>
            <person name="Yoshikawa Y."/>
            <person name="Matsunawa H."/>
            <person name="Ichihara T."/>
            <person name="Shiohata N."/>
            <person name="Sano S."/>
            <person name="Moriya S."/>
            <person name="Momiyama H."/>
            <person name="Satoh N."/>
            <person name="Takami S."/>
            <person name="Terashima Y."/>
            <person name="Suzuki O."/>
            <person name="Nakagawa S."/>
            <person name="Senoh A."/>
            <person name="Mizoguchi H."/>
            <person name="Goto Y."/>
            <person name="Shimizu F."/>
            <person name="Wakebe H."/>
            <person name="Hishigaki H."/>
            <person name="Watanabe T."/>
            <person name="Sugiyama A."/>
            <person name="Takemoto M."/>
            <person name="Kawakami B."/>
            <person name="Yamazaki M."/>
            <person name="Watanabe K."/>
            <person name="Kumagai A."/>
            <person name="Itakura S."/>
            <person name="Fukuzumi Y."/>
            <person name="Fujimori Y."/>
            <person name="Komiyama M."/>
            <person name="Tashiro H."/>
            <person name="Tanigami A."/>
            <person name="Fujiwara T."/>
            <person name="Ono T."/>
            <person name="Yamada K."/>
            <person name="Fujii Y."/>
            <person name="Ozaki K."/>
            <person name="Hirao M."/>
            <person name="Ohmori Y."/>
            <person name="Kawabata A."/>
            <person name="Hikiji T."/>
            <person name="Kobatake N."/>
            <person name="Inagaki H."/>
            <person name="Ikema Y."/>
            <person name="Okamoto S."/>
            <person name="Okitani R."/>
            <person name="Kawakami T."/>
            <person name="Noguchi S."/>
            <person name="Itoh T."/>
            <person name="Shigeta K."/>
            <person name="Senba T."/>
            <person name="Matsumura K."/>
            <person name="Nakajima Y."/>
            <person name="Mizuno T."/>
            <person name="Morinaga M."/>
            <person name="Sasaki M."/>
            <person name="Togashi T."/>
            <person name="Oyama M."/>
            <person name="Hata H."/>
            <person name="Watanabe M."/>
            <person name="Komatsu T."/>
            <person name="Mizushima-Sugano J."/>
            <person name="Satoh T."/>
            <person name="Shirai Y."/>
            <person name="Takahashi Y."/>
            <person name="Nakagawa K."/>
            <person name="Okumura K."/>
            <person name="Nagase T."/>
            <person name="Nomura N."/>
            <person name="Kikuchi H."/>
            <person name="Masuho Y."/>
            <person name="Yamashita R."/>
            <person name="Nakai K."/>
            <person name="Yada T."/>
            <person name="Nakamura Y."/>
            <person name="Ohara O."/>
            <person name="Isogai T."/>
            <person name="Sugano S."/>
        </authorList>
    </citation>
    <scope>NUCLEOTIDE SEQUENCE [LARGE SCALE MRNA] (ISOFORM 2)</scope>
    <source>
        <tissue>Teratocarcinoma</tissue>
    </source>
</reference>
<reference key="2">
    <citation type="journal article" date="2004" name="Nature">
        <title>The sequence and analysis of duplication-rich human chromosome 16.</title>
        <authorList>
            <person name="Martin J."/>
            <person name="Han C."/>
            <person name="Gordon L.A."/>
            <person name="Terry A."/>
            <person name="Prabhakar S."/>
            <person name="She X."/>
            <person name="Xie G."/>
            <person name="Hellsten U."/>
            <person name="Chan Y.M."/>
            <person name="Altherr M."/>
            <person name="Couronne O."/>
            <person name="Aerts A."/>
            <person name="Bajorek E."/>
            <person name="Black S."/>
            <person name="Blumer H."/>
            <person name="Branscomb E."/>
            <person name="Brown N.C."/>
            <person name="Bruno W.J."/>
            <person name="Buckingham J.M."/>
            <person name="Callen D.F."/>
            <person name="Campbell C.S."/>
            <person name="Campbell M.L."/>
            <person name="Campbell E.W."/>
            <person name="Caoile C."/>
            <person name="Challacombe J.F."/>
            <person name="Chasteen L.A."/>
            <person name="Chertkov O."/>
            <person name="Chi H.C."/>
            <person name="Christensen M."/>
            <person name="Clark L.M."/>
            <person name="Cohn J.D."/>
            <person name="Denys M."/>
            <person name="Detter J.C."/>
            <person name="Dickson M."/>
            <person name="Dimitrijevic-Bussod M."/>
            <person name="Escobar J."/>
            <person name="Fawcett J.J."/>
            <person name="Flowers D."/>
            <person name="Fotopulos D."/>
            <person name="Glavina T."/>
            <person name="Gomez M."/>
            <person name="Gonzales E."/>
            <person name="Goodstein D."/>
            <person name="Goodwin L.A."/>
            <person name="Grady D.L."/>
            <person name="Grigoriev I."/>
            <person name="Groza M."/>
            <person name="Hammon N."/>
            <person name="Hawkins T."/>
            <person name="Haydu L."/>
            <person name="Hildebrand C.E."/>
            <person name="Huang W."/>
            <person name="Israni S."/>
            <person name="Jett J."/>
            <person name="Jewett P.B."/>
            <person name="Kadner K."/>
            <person name="Kimball H."/>
            <person name="Kobayashi A."/>
            <person name="Krawczyk M.-C."/>
            <person name="Leyba T."/>
            <person name="Longmire J.L."/>
            <person name="Lopez F."/>
            <person name="Lou Y."/>
            <person name="Lowry S."/>
            <person name="Ludeman T."/>
            <person name="Manohar C.F."/>
            <person name="Mark G.A."/>
            <person name="McMurray K.L."/>
            <person name="Meincke L.J."/>
            <person name="Morgan J."/>
            <person name="Moyzis R.K."/>
            <person name="Mundt M.O."/>
            <person name="Munk A.C."/>
            <person name="Nandkeshwar R.D."/>
            <person name="Pitluck S."/>
            <person name="Pollard M."/>
            <person name="Predki P."/>
            <person name="Parson-Quintana B."/>
            <person name="Ramirez L."/>
            <person name="Rash S."/>
            <person name="Retterer J."/>
            <person name="Ricke D.O."/>
            <person name="Robinson D.L."/>
            <person name="Rodriguez A."/>
            <person name="Salamov A."/>
            <person name="Saunders E.H."/>
            <person name="Scott D."/>
            <person name="Shough T."/>
            <person name="Stallings R.L."/>
            <person name="Stalvey M."/>
            <person name="Sutherland R.D."/>
            <person name="Tapia R."/>
            <person name="Tesmer J.G."/>
            <person name="Thayer N."/>
            <person name="Thompson L.S."/>
            <person name="Tice H."/>
            <person name="Torney D.C."/>
            <person name="Tran-Gyamfi M."/>
            <person name="Tsai M."/>
            <person name="Ulanovsky L.E."/>
            <person name="Ustaszewska A."/>
            <person name="Vo N."/>
            <person name="White P.S."/>
            <person name="Williams A.L."/>
            <person name="Wills P.L."/>
            <person name="Wu J.-R."/>
            <person name="Wu K."/>
            <person name="Yang J."/>
            <person name="DeJong P."/>
            <person name="Bruce D."/>
            <person name="Doggett N.A."/>
            <person name="Deaven L."/>
            <person name="Schmutz J."/>
            <person name="Grimwood J."/>
            <person name="Richardson P."/>
            <person name="Rokhsar D.S."/>
            <person name="Eichler E.E."/>
            <person name="Gilna P."/>
            <person name="Lucas S.M."/>
            <person name="Myers R.M."/>
            <person name="Rubin E.M."/>
            <person name="Pennacchio L.A."/>
        </authorList>
    </citation>
    <scope>NUCLEOTIDE SEQUENCE [LARGE SCALE GENOMIC DNA]</scope>
</reference>
<reference key="3">
    <citation type="submission" date="2005-07" db="EMBL/GenBank/DDBJ databases">
        <authorList>
            <person name="Mural R.J."/>
            <person name="Istrail S."/>
            <person name="Sutton G.G."/>
            <person name="Florea L."/>
            <person name="Halpern A.L."/>
            <person name="Mobarry C.M."/>
            <person name="Lippert R."/>
            <person name="Walenz B."/>
            <person name="Shatkay H."/>
            <person name="Dew I."/>
            <person name="Miller J.R."/>
            <person name="Flanigan M.J."/>
            <person name="Edwards N.J."/>
            <person name="Bolanos R."/>
            <person name="Fasulo D."/>
            <person name="Halldorsson B.V."/>
            <person name="Hannenhalli S."/>
            <person name="Turner R."/>
            <person name="Yooseph S."/>
            <person name="Lu F."/>
            <person name="Nusskern D.R."/>
            <person name="Shue B.C."/>
            <person name="Zheng X.H."/>
            <person name="Zhong F."/>
            <person name="Delcher A.L."/>
            <person name="Huson D.H."/>
            <person name="Kravitz S.A."/>
            <person name="Mouchard L."/>
            <person name="Reinert K."/>
            <person name="Remington K.A."/>
            <person name="Clark A.G."/>
            <person name="Waterman M.S."/>
            <person name="Eichler E.E."/>
            <person name="Adams M.D."/>
            <person name="Hunkapiller M.W."/>
            <person name="Myers E.W."/>
            <person name="Venter J.C."/>
        </authorList>
    </citation>
    <scope>NUCLEOTIDE SEQUENCE [LARGE SCALE GENOMIC DNA]</scope>
</reference>
<reference key="4">
    <citation type="journal article" date="2004" name="Genome Res.">
        <title>The status, quality, and expansion of the NIH full-length cDNA project: the Mammalian Gene Collection (MGC).</title>
        <authorList>
            <consortium name="The MGC Project Team"/>
        </authorList>
    </citation>
    <scope>NUCLEOTIDE SEQUENCE [LARGE SCALE MRNA] (ISOFORM 2)</scope>
</reference>
<reference key="5">
    <citation type="submission" date="2006-10" db="EMBL/GenBank/DDBJ databases">
        <title>Exhaustive RT-PCR and sequencing of all novel TWINSCAN predictions in human.</title>
        <authorList>
            <person name="Stevens M."/>
            <person name="Wei C."/>
            <person name="Gross S.S."/>
            <person name="McPherson J."/>
            <person name="Brent M.R."/>
        </authorList>
    </citation>
    <scope>NUCLEOTIDE SEQUENCE [LARGE SCALE MRNA] OF 1-95 (ISOFORM 1)</scope>
</reference>
<reference key="6">
    <citation type="journal article" date="2009" name="Am. J. Hum. Genet.">
        <title>Spinocerebellar ataxia type 31 is associated with 'inserted' penta-nucleotide repeats containing (TGGAA)n.</title>
        <authorList>
            <person name="Sato N."/>
            <person name="Amino T."/>
            <person name="Kobayashi K."/>
            <person name="Asakawa S."/>
            <person name="Ishiguro T."/>
            <person name="Tsunemi T."/>
            <person name="Takahashi M."/>
            <person name="Matsuura T."/>
            <person name="Flanigan K.M."/>
            <person name="Iwasaki S."/>
            <person name="Ishino F."/>
            <person name="Saito Y."/>
            <person name="Murayama S."/>
            <person name="Yoshida M."/>
            <person name="Hashizume Y."/>
            <person name="Takahashi Y."/>
            <person name="Tsuji S."/>
            <person name="Shimizu N."/>
            <person name="Toda T."/>
            <person name="Ishikawa K."/>
            <person name="Mizusawa H."/>
        </authorList>
    </citation>
    <scope>NUCLEOTIDE SEQUENCE [MRNA] OF 1-133 (ISOFORM 3)</scope>
    <scope>INVOLVEMENT IN SCA31</scope>
</reference>
<keyword id="KW-0025">Alternative splicing</keyword>
<keyword id="KW-0472">Membrane</keyword>
<keyword id="KW-0523">Neurodegeneration</keyword>
<keyword id="KW-1267">Proteomics identification</keyword>
<keyword id="KW-1185">Reference proteome</keyword>
<keyword id="KW-0950">Spinocerebellar ataxia</keyword>
<keyword id="KW-0812">Transmembrane</keyword>
<keyword id="KW-1133">Transmembrane helix</keyword>
<comment type="subunit">
    <text evidence="1">Interacts with NEDD4.</text>
</comment>
<comment type="subcellular location">
    <subcellularLocation>
        <location evidence="8">Membrane</location>
        <topology evidence="8">Single-pass membrane protein</topology>
    </subcellularLocation>
</comment>
<comment type="alternative products">
    <event type="alternative splicing"/>
    <isoform>
        <id>Q3B7T3-1</id>
        <name>1</name>
        <sequence type="displayed"/>
    </isoform>
    <isoform>
        <id>Q3B7T3-2</id>
        <name>2</name>
        <sequence type="described" ref="VSP_031911"/>
    </isoform>
    <isoform>
        <id>Q3B7T3-3</id>
        <name>3</name>
        <sequence type="described" ref="VSP_031911 VSP_046914"/>
    </isoform>
</comment>
<comment type="disease" evidence="4">
    <disease id="DI-01060">
        <name>Spinocerebellar ataxia 31</name>
        <acronym>SCA31</acronym>
        <description>A form of spinocerebellar ataxia, a clinically and genetically heterogeneous group of cerebellar disorders. Patients show progressive incoordination of gait and often poor coordination of hands, speech and eye movements, due to degeneration of the cerebellum with variable involvement of the brainstem and spinal cord. SCA31 belongs to the autosomal dominant cerebellar ataxias type III (ADCA III) which are characterized by pure cerebellar ataxia without additional signs.</description>
        <dbReference type="MIM" id="117210"/>
    </disease>
    <text>The disease is caused by variants affecting the gene represented in this entry.</text>
</comment>
<comment type="sequence caution" evidence="8">
    <conflict type="erroneous initiation">
        <sequence resource="EMBL-CDS" id="AAI07478"/>
    </conflict>
</comment>
<comment type="sequence caution" evidence="8">
    <conflict type="frameshift">
        <sequence resource="EMBL" id="EG328447"/>
    </conflict>
</comment>
<accession>Q3B7T3</accession>
<accession>B3KPC0</accession>
<accession>H3BP97</accession>
<name>BEAN1_HUMAN</name>
<dbReference type="EMBL" id="AK056142">
    <property type="protein sequence ID" value="BAG51632.1"/>
    <property type="molecule type" value="mRNA"/>
</dbReference>
<dbReference type="EMBL" id="AC010542">
    <property type="status" value="NOT_ANNOTATED_CDS"/>
    <property type="molecule type" value="Genomic_DNA"/>
</dbReference>
<dbReference type="EMBL" id="AC132186">
    <property type="status" value="NOT_ANNOTATED_CDS"/>
    <property type="molecule type" value="Genomic_DNA"/>
</dbReference>
<dbReference type="EMBL" id="CH471092">
    <property type="protein sequence ID" value="EAW83011.1"/>
    <property type="molecule type" value="Genomic_DNA"/>
</dbReference>
<dbReference type="EMBL" id="BC107477">
    <property type="protein sequence ID" value="AAI07478.1"/>
    <property type="status" value="ALT_INIT"/>
    <property type="molecule type" value="mRNA"/>
</dbReference>
<dbReference type="EMBL" id="EG328447">
    <property type="status" value="NOT_ANNOTATED_CDS"/>
    <property type="molecule type" value="mRNA"/>
</dbReference>
<dbReference type="EMBL" id="AB472396">
    <property type="status" value="NOT_ANNOTATED_CDS"/>
    <property type="molecule type" value="mRNA"/>
</dbReference>
<dbReference type="CCDS" id="CCDS54015.1">
    <molecule id="Q3B7T3-1"/>
</dbReference>
<dbReference type="CCDS" id="CCDS58469.1">
    <molecule id="Q3B7T3-2"/>
</dbReference>
<dbReference type="RefSeq" id="NP_001129578.1">
    <molecule id="Q3B7T3-2"/>
    <property type="nucleotide sequence ID" value="NM_001136106.5"/>
</dbReference>
<dbReference type="RefSeq" id="NP_001171491.1">
    <molecule id="Q3B7T3-1"/>
    <property type="nucleotide sequence ID" value="NM_001178020.3"/>
</dbReference>
<dbReference type="RefSeq" id="NP_001184154.1">
    <property type="nucleotide sequence ID" value="NM_001197225.3"/>
</dbReference>
<dbReference type="RefSeq" id="XP_011521185.1">
    <molecule id="Q3B7T3-1"/>
    <property type="nucleotide sequence ID" value="XM_011522883.2"/>
</dbReference>
<dbReference type="RefSeq" id="XP_011521186.1">
    <molecule id="Q3B7T3-1"/>
    <property type="nucleotide sequence ID" value="XM_011522884.2"/>
</dbReference>
<dbReference type="RefSeq" id="XP_011521190.1">
    <property type="nucleotide sequence ID" value="XM_011522888.1"/>
</dbReference>
<dbReference type="RefSeq" id="XP_011521191.1">
    <property type="nucleotide sequence ID" value="XM_011522889.1"/>
</dbReference>
<dbReference type="RefSeq" id="XP_011521192.1">
    <property type="nucleotide sequence ID" value="XM_011522890.1"/>
</dbReference>
<dbReference type="RefSeq" id="XP_011521193.1">
    <property type="nucleotide sequence ID" value="XM_011522891.1"/>
</dbReference>
<dbReference type="RefSeq" id="XP_011521194.1">
    <property type="nucleotide sequence ID" value="XM_011522892.2"/>
</dbReference>
<dbReference type="SMR" id="Q3B7T3"/>
<dbReference type="BioGRID" id="126974">
    <property type="interactions" value="4"/>
</dbReference>
<dbReference type="FunCoup" id="Q3B7T3">
    <property type="interactions" value="30"/>
</dbReference>
<dbReference type="IntAct" id="Q3B7T3">
    <property type="interactions" value="2"/>
</dbReference>
<dbReference type="STRING" id="9606.ENSP00000442793"/>
<dbReference type="iPTMnet" id="Q3B7T3"/>
<dbReference type="PhosphoSitePlus" id="Q3B7T3"/>
<dbReference type="BioMuta" id="BEAN1"/>
<dbReference type="DMDM" id="190360694"/>
<dbReference type="MassIVE" id="Q3B7T3"/>
<dbReference type="PaxDb" id="9606-ENSP00000442793"/>
<dbReference type="PeptideAtlas" id="Q3B7T3"/>
<dbReference type="Antibodypedia" id="65669">
    <property type="antibodies" value="82 antibodies from 16 providers"/>
</dbReference>
<dbReference type="DNASU" id="146227"/>
<dbReference type="Ensembl" id="ENST00000299694.12">
    <molecule id="Q3B7T3-2"/>
    <property type="protein sequence ID" value="ENSP00000299694.8"/>
    <property type="gene ID" value="ENSG00000166546.15"/>
</dbReference>
<dbReference type="Ensembl" id="ENST00000536005.7">
    <molecule id="Q3B7T3-1"/>
    <property type="protein sequence ID" value="ENSP00000442793.2"/>
    <property type="gene ID" value="ENSG00000166546.15"/>
</dbReference>
<dbReference type="Ensembl" id="ENST00000562849.6">
    <molecule id="Q3B7T3-2"/>
    <property type="protein sequence ID" value="ENSP00000456822.1"/>
    <property type="gene ID" value="ENSG00000166546.15"/>
</dbReference>
<dbReference type="GeneID" id="146227"/>
<dbReference type="KEGG" id="hsa:146227"/>
<dbReference type="MANE-Select" id="ENST00000536005.7">
    <property type="protein sequence ID" value="ENSP00000442793.2"/>
    <property type="RefSeq nucleotide sequence ID" value="NM_001178020.3"/>
    <property type="RefSeq protein sequence ID" value="NP_001171491.1"/>
</dbReference>
<dbReference type="UCSC" id="uc002eoq.4">
    <molecule id="Q3B7T3-1"/>
    <property type="organism name" value="human"/>
</dbReference>
<dbReference type="AGR" id="HGNC:24160"/>
<dbReference type="CTD" id="146227"/>
<dbReference type="DisGeNET" id="146227"/>
<dbReference type="GeneCards" id="BEAN1"/>
<dbReference type="HGNC" id="HGNC:24160">
    <property type="gene designation" value="BEAN1"/>
</dbReference>
<dbReference type="HPA" id="ENSG00000166546">
    <property type="expression patterns" value="Tissue enhanced (brain)"/>
</dbReference>
<dbReference type="MalaCards" id="BEAN1"/>
<dbReference type="MIM" id="117210">
    <property type="type" value="phenotype"/>
</dbReference>
<dbReference type="MIM" id="612051">
    <property type="type" value="gene"/>
</dbReference>
<dbReference type="neXtProt" id="NX_Q3B7T3"/>
<dbReference type="OpenTargets" id="ENSG00000166546"/>
<dbReference type="Orphanet" id="217012">
    <property type="disease" value="Spinocerebellar ataxia type 31"/>
</dbReference>
<dbReference type="VEuPathDB" id="HostDB:ENSG00000166546"/>
<dbReference type="eggNOG" id="ENOG502R1UF">
    <property type="taxonomic scope" value="Eukaryota"/>
</dbReference>
<dbReference type="GeneTree" id="ENSGT00390000003283"/>
<dbReference type="HOGENOM" id="CLU_074372_0_0_1"/>
<dbReference type="InParanoid" id="Q3B7T3"/>
<dbReference type="OMA" id="HRIRYSC"/>
<dbReference type="OrthoDB" id="9085892at2759"/>
<dbReference type="PAN-GO" id="Q3B7T3">
    <property type="GO annotations" value="0 GO annotations based on evolutionary models"/>
</dbReference>
<dbReference type="PhylomeDB" id="Q3B7T3"/>
<dbReference type="TreeFam" id="TF335893"/>
<dbReference type="PathwayCommons" id="Q3B7T3"/>
<dbReference type="SignaLink" id="Q3B7T3"/>
<dbReference type="BioGRID-ORCS" id="146227">
    <property type="hits" value="16 hits in 1132 CRISPR screens"/>
</dbReference>
<dbReference type="ChiTaRS" id="BEAN1">
    <property type="organism name" value="human"/>
</dbReference>
<dbReference type="GenomeRNAi" id="146227"/>
<dbReference type="Pharos" id="Q3B7T3">
    <property type="development level" value="Tbio"/>
</dbReference>
<dbReference type="PRO" id="PR:Q3B7T3"/>
<dbReference type="Proteomes" id="UP000005640">
    <property type="component" value="Chromosome 16"/>
</dbReference>
<dbReference type="RNAct" id="Q3B7T3">
    <property type="molecule type" value="protein"/>
</dbReference>
<dbReference type="Bgee" id="ENSG00000166546">
    <property type="expression patterns" value="Expressed in oocyte and 108 other cell types or tissues"/>
</dbReference>
<dbReference type="ExpressionAtlas" id="Q3B7T3">
    <property type="expression patterns" value="baseline and differential"/>
</dbReference>
<dbReference type="GO" id="GO:0016020">
    <property type="term" value="C:membrane"/>
    <property type="evidence" value="ECO:0007669"/>
    <property type="project" value="UniProtKB-SubCell"/>
</dbReference>
<dbReference type="InterPro" id="IPR039352">
    <property type="entry name" value="BEAN1"/>
</dbReference>
<dbReference type="PANTHER" id="PTHR36464">
    <property type="entry name" value="PROTEIN BEAN1"/>
    <property type="match status" value="1"/>
</dbReference>
<dbReference type="PANTHER" id="PTHR36464:SF1">
    <property type="entry name" value="PROTEIN BEAN1"/>
    <property type="match status" value="1"/>
</dbReference>
<proteinExistence type="evidence at protein level"/>
<feature type="chain" id="PRO_0000322540" description="Protein BEAN1">
    <location>
        <begin position="1"/>
        <end position="259"/>
    </location>
</feature>
<feature type="transmembrane region" description="Helical" evidence="2">
    <location>
        <begin position="36"/>
        <end position="56"/>
    </location>
</feature>
<feature type="region of interest" description="Disordered" evidence="3">
    <location>
        <begin position="71"/>
        <end position="91"/>
    </location>
</feature>
<feature type="region of interest" description="Disordered" evidence="3">
    <location>
        <begin position="152"/>
        <end position="259"/>
    </location>
</feature>
<feature type="compositionally biased region" description="Basic residues" evidence="3">
    <location>
        <begin position="71"/>
        <end position="89"/>
    </location>
</feature>
<feature type="compositionally biased region" description="Polar residues" evidence="3">
    <location>
        <begin position="171"/>
        <end position="187"/>
    </location>
</feature>
<feature type="compositionally biased region" description="Low complexity" evidence="3">
    <location>
        <begin position="221"/>
        <end position="230"/>
    </location>
</feature>
<feature type="splice variant" id="VSP_031911" description="In isoform 2 and isoform 3." evidence="5 6 7">
    <location>
        <begin position="1"/>
        <end position="109"/>
    </location>
</feature>
<feature type="splice variant" id="VSP_046914" description="In isoform 3." evidence="7">
    <original>YEECVGPGATQLYVPTDAPPPYSLTDSCPTLDGTSDSGSGHSPGRHQQEQRTPAQGGLHTVSMDTLPPYEAVCGAGPPSGLLPLPGPDPGPRGSQGSPTPTRAPASGPERIV</original>
    <variation>VSLSRLRWSAMMYTGSFTYWVRSMLSRHKLDAILGRLGYTATLESEFSLVQAISKENVKQMVFKIFLVRVSCEAVLRTAGTRMLEPGTEKLARTHSRHSSEKRLVKPCSCLEGVQPGPGSGGPQQGPSEGVGSETALAEGTAGQRSLPMALSPSEVSTAPNSLPSGSPVL</variation>
    <location>
        <begin position="148"/>
        <end position="259"/>
    </location>
</feature>
<organism>
    <name type="scientific">Homo sapiens</name>
    <name type="common">Human</name>
    <dbReference type="NCBI Taxonomy" id="9606"/>
    <lineage>
        <taxon>Eukaryota</taxon>
        <taxon>Metazoa</taxon>
        <taxon>Chordata</taxon>
        <taxon>Craniata</taxon>
        <taxon>Vertebrata</taxon>
        <taxon>Euteleostomi</taxon>
        <taxon>Mammalia</taxon>
        <taxon>Eutheria</taxon>
        <taxon>Euarchontoglires</taxon>
        <taxon>Primates</taxon>
        <taxon>Haplorrhini</taxon>
        <taxon>Catarrhini</taxon>
        <taxon>Hominidae</taxon>
        <taxon>Homo</taxon>
    </lineage>
</organism>
<gene>
    <name type="primary">BEAN1</name>
</gene>
<sequence length="259" mass="28626">MSFKRPCPLARYNRTSYFYPTFSESSEHSHLLVSPVLVASAVIGVVIILSCITIIVGSIRRDRQARLQRHRHRHHRHHHHHHHHRRRRHREYEHGYVSDEHTYSRSSRRMRYACSSSEDWPPPLDISSDGDVDATVLRELYPDSPPGYEECVGPGATQLYVPTDAPPPYSLTDSCPTLDGTSDSGSGHSPGRHQQEQRTPAQGGLHTVSMDTLPPYEAVCGAGPPSGLLPLPGPDPGPRGSQGSPTPTRAPASGPERIV</sequence>
<evidence type="ECO:0000250" key="1"/>
<evidence type="ECO:0000255" key="2"/>
<evidence type="ECO:0000256" key="3">
    <source>
        <dbReference type="SAM" id="MobiDB-lite"/>
    </source>
</evidence>
<evidence type="ECO:0000269" key="4">
    <source>
    </source>
</evidence>
<evidence type="ECO:0000303" key="5">
    <source>
    </source>
</evidence>
<evidence type="ECO:0000303" key="6">
    <source>
    </source>
</evidence>
<evidence type="ECO:0000303" key="7">
    <source>
    </source>
</evidence>
<evidence type="ECO:0000305" key="8"/>
<protein>
    <recommendedName>
        <fullName>Protein BEAN1</fullName>
    </recommendedName>
    <alternativeName>
        <fullName>Brain-expressed protein associating with Nedd4 homolog</fullName>
        <shortName>BEAN</shortName>
    </alternativeName>
</protein>